<keyword id="KW-0067">ATP-binding</keyword>
<keyword id="KW-0963">Cytoplasm</keyword>
<keyword id="KW-1015">Disulfide bond</keyword>
<keyword id="KW-0547">Nucleotide-binding</keyword>
<keyword id="KW-1185">Reference proteome</keyword>
<keyword id="KW-0694">RNA-binding</keyword>
<keyword id="KW-0808">Transferase</keyword>
<keyword id="KW-0819">tRNA processing</keyword>
<keyword id="KW-0820">tRNA-binding</keyword>
<evidence type="ECO:0000255" key="1">
    <source>
        <dbReference type="HAMAP-Rule" id="MF_00144"/>
    </source>
</evidence>
<name>MNMA_AMOA5</name>
<protein>
    <recommendedName>
        <fullName evidence="1">tRNA-specific 2-thiouridylase MnmA</fullName>
        <ecNumber evidence="1">2.8.1.13</ecNumber>
    </recommendedName>
</protein>
<comment type="function">
    <text evidence="1">Catalyzes the 2-thiolation of uridine at the wobble position (U34) of tRNA, leading to the formation of s(2)U34.</text>
</comment>
<comment type="catalytic activity">
    <reaction evidence="1">
        <text>S-sulfanyl-L-cysteinyl-[protein] + uridine(34) in tRNA + AH2 + ATP = 2-thiouridine(34) in tRNA + L-cysteinyl-[protein] + A + AMP + diphosphate + H(+)</text>
        <dbReference type="Rhea" id="RHEA:47032"/>
        <dbReference type="Rhea" id="RHEA-COMP:10131"/>
        <dbReference type="Rhea" id="RHEA-COMP:11726"/>
        <dbReference type="Rhea" id="RHEA-COMP:11727"/>
        <dbReference type="Rhea" id="RHEA-COMP:11728"/>
        <dbReference type="ChEBI" id="CHEBI:13193"/>
        <dbReference type="ChEBI" id="CHEBI:15378"/>
        <dbReference type="ChEBI" id="CHEBI:17499"/>
        <dbReference type="ChEBI" id="CHEBI:29950"/>
        <dbReference type="ChEBI" id="CHEBI:30616"/>
        <dbReference type="ChEBI" id="CHEBI:33019"/>
        <dbReference type="ChEBI" id="CHEBI:61963"/>
        <dbReference type="ChEBI" id="CHEBI:65315"/>
        <dbReference type="ChEBI" id="CHEBI:87170"/>
        <dbReference type="ChEBI" id="CHEBI:456215"/>
        <dbReference type="EC" id="2.8.1.13"/>
    </reaction>
</comment>
<comment type="subcellular location">
    <subcellularLocation>
        <location evidence="1">Cytoplasm</location>
    </subcellularLocation>
</comment>
<comment type="similarity">
    <text evidence="1">Belongs to the MnmA/TRMU family.</text>
</comment>
<dbReference type="EC" id="2.8.1.13" evidence="1"/>
<dbReference type="EMBL" id="CP001102">
    <property type="protein sequence ID" value="ACE06530.1"/>
    <property type="molecule type" value="Genomic_DNA"/>
</dbReference>
<dbReference type="RefSeq" id="WP_012473282.1">
    <property type="nucleotide sequence ID" value="NC_010830.1"/>
</dbReference>
<dbReference type="SMR" id="B3ETH8"/>
<dbReference type="STRING" id="452471.Aasi_1200"/>
<dbReference type="KEGG" id="aas:Aasi_1200"/>
<dbReference type="eggNOG" id="COG0482">
    <property type="taxonomic scope" value="Bacteria"/>
</dbReference>
<dbReference type="HOGENOM" id="CLU_035188_1_0_10"/>
<dbReference type="OrthoDB" id="9800696at2"/>
<dbReference type="Proteomes" id="UP000001227">
    <property type="component" value="Chromosome"/>
</dbReference>
<dbReference type="GO" id="GO:0005737">
    <property type="term" value="C:cytoplasm"/>
    <property type="evidence" value="ECO:0007669"/>
    <property type="project" value="UniProtKB-SubCell"/>
</dbReference>
<dbReference type="GO" id="GO:0005524">
    <property type="term" value="F:ATP binding"/>
    <property type="evidence" value="ECO:0007669"/>
    <property type="project" value="UniProtKB-KW"/>
</dbReference>
<dbReference type="GO" id="GO:0000049">
    <property type="term" value="F:tRNA binding"/>
    <property type="evidence" value="ECO:0007669"/>
    <property type="project" value="UniProtKB-KW"/>
</dbReference>
<dbReference type="GO" id="GO:0103016">
    <property type="term" value="F:tRNA-uridine 2-sulfurtransferase activity"/>
    <property type="evidence" value="ECO:0007669"/>
    <property type="project" value="UniProtKB-EC"/>
</dbReference>
<dbReference type="GO" id="GO:0002143">
    <property type="term" value="P:tRNA wobble position uridine thiolation"/>
    <property type="evidence" value="ECO:0007669"/>
    <property type="project" value="TreeGrafter"/>
</dbReference>
<dbReference type="CDD" id="cd01998">
    <property type="entry name" value="MnmA_TRMU-like"/>
    <property type="match status" value="1"/>
</dbReference>
<dbReference type="FunFam" id="3.40.50.620:FF:000115">
    <property type="entry name" value="tRNA-specific 2-thiouridylase MnmA"/>
    <property type="match status" value="1"/>
</dbReference>
<dbReference type="Gene3D" id="2.30.30.280">
    <property type="entry name" value="Adenine nucleotide alpha hydrolases-like domains"/>
    <property type="match status" value="1"/>
</dbReference>
<dbReference type="Gene3D" id="3.40.50.620">
    <property type="entry name" value="HUPs"/>
    <property type="match status" value="1"/>
</dbReference>
<dbReference type="Gene3D" id="2.40.30.10">
    <property type="entry name" value="Translation factors"/>
    <property type="match status" value="1"/>
</dbReference>
<dbReference type="HAMAP" id="MF_00144">
    <property type="entry name" value="tRNA_thiouridyl_MnmA"/>
    <property type="match status" value="1"/>
</dbReference>
<dbReference type="InterPro" id="IPR004506">
    <property type="entry name" value="MnmA-like"/>
</dbReference>
<dbReference type="InterPro" id="IPR046885">
    <property type="entry name" value="MnmA-like_C"/>
</dbReference>
<dbReference type="InterPro" id="IPR046884">
    <property type="entry name" value="MnmA-like_central"/>
</dbReference>
<dbReference type="InterPro" id="IPR023382">
    <property type="entry name" value="MnmA-like_central_sf"/>
</dbReference>
<dbReference type="InterPro" id="IPR014729">
    <property type="entry name" value="Rossmann-like_a/b/a_fold"/>
</dbReference>
<dbReference type="NCBIfam" id="NF001138">
    <property type="entry name" value="PRK00143.1"/>
    <property type="match status" value="1"/>
</dbReference>
<dbReference type="NCBIfam" id="TIGR00420">
    <property type="entry name" value="trmU"/>
    <property type="match status" value="1"/>
</dbReference>
<dbReference type="PANTHER" id="PTHR11933:SF5">
    <property type="entry name" value="MITOCHONDRIAL TRNA-SPECIFIC 2-THIOURIDYLASE 1"/>
    <property type="match status" value="1"/>
</dbReference>
<dbReference type="PANTHER" id="PTHR11933">
    <property type="entry name" value="TRNA 5-METHYLAMINOMETHYL-2-THIOURIDYLATE -METHYLTRANSFERASE"/>
    <property type="match status" value="1"/>
</dbReference>
<dbReference type="Pfam" id="PF03054">
    <property type="entry name" value="tRNA_Me_trans"/>
    <property type="match status" value="1"/>
</dbReference>
<dbReference type="Pfam" id="PF20258">
    <property type="entry name" value="tRNA_Me_trans_C"/>
    <property type="match status" value="1"/>
</dbReference>
<dbReference type="Pfam" id="PF20259">
    <property type="entry name" value="tRNA_Me_trans_M"/>
    <property type="match status" value="1"/>
</dbReference>
<dbReference type="SUPFAM" id="SSF52402">
    <property type="entry name" value="Adenine nucleotide alpha hydrolases-like"/>
    <property type="match status" value="1"/>
</dbReference>
<organism>
    <name type="scientific">Amoebophilus asiaticus (strain 5a2)</name>
    <dbReference type="NCBI Taxonomy" id="452471"/>
    <lineage>
        <taxon>Bacteria</taxon>
        <taxon>Pseudomonadati</taxon>
        <taxon>Bacteroidota</taxon>
        <taxon>Cytophagia</taxon>
        <taxon>Cytophagales</taxon>
        <taxon>Amoebophilaceae</taxon>
        <taxon>Candidatus Amoebophilus</taxon>
    </lineage>
</organism>
<feature type="chain" id="PRO_1000096283" description="tRNA-specific 2-thiouridylase MnmA">
    <location>
        <begin position="1"/>
        <end position="376"/>
    </location>
</feature>
<feature type="region of interest" description="Interaction with tRNA" evidence="1">
    <location>
        <begin position="151"/>
        <end position="153"/>
    </location>
</feature>
<feature type="region of interest" description="Interaction with tRNA" evidence="1">
    <location>
        <begin position="312"/>
        <end position="313"/>
    </location>
</feature>
<feature type="active site" description="Nucleophile" evidence="1">
    <location>
        <position position="105"/>
    </location>
</feature>
<feature type="active site" description="Cysteine persulfide intermediate" evidence="1">
    <location>
        <position position="202"/>
    </location>
</feature>
<feature type="binding site" evidence="1">
    <location>
        <begin position="9"/>
        <end position="16"/>
    </location>
    <ligand>
        <name>ATP</name>
        <dbReference type="ChEBI" id="CHEBI:30616"/>
    </ligand>
</feature>
<feature type="binding site" evidence="1">
    <location>
        <position position="35"/>
    </location>
    <ligand>
        <name>ATP</name>
        <dbReference type="ChEBI" id="CHEBI:30616"/>
    </ligand>
</feature>
<feature type="binding site" evidence="1">
    <location>
        <position position="129"/>
    </location>
    <ligand>
        <name>ATP</name>
        <dbReference type="ChEBI" id="CHEBI:30616"/>
    </ligand>
</feature>
<feature type="site" description="Interaction with tRNA" evidence="1">
    <location>
        <position position="130"/>
    </location>
</feature>
<feature type="site" description="Interaction with tRNA" evidence="1">
    <location>
        <position position="344"/>
    </location>
</feature>
<feature type="disulfide bond" description="Alternate" evidence="1">
    <location>
        <begin position="105"/>
        <end position="202"/>
    </location>
</feature>
<gene>
    <name evidence="1" type="primary">mnmA</name>
    <name type="ordered locus">Aasi_1200</name>
</gene>
<proteinExistence type="inferred from homology"/>
<sequence length="376" mass="42052">MKKGRVLVAMSGGIDSSITALLLHEQGYEIVGLTMKTWDYVSSGGRKKETGCCSLDSINDARNVAVSLGFPHIILDIREEFGDYVISNFTSEYLAGRTPNPCVLCNTHIKWDALLRRADKLNCEYIATGHYANIRHENGRYIVSRGKDLNKDQSYALWGVSQESLSRTLLPLGVFTKPEIREIASQRGFKELVTKSESYEICFIPDNDYRGFLKRRVDNLEEQVKGGEFVLEDGTVVGHHEGYPFYTVGQRKGLGITLGYPVYVTEIQADKNRVVLGTFDELARDGMYVHKLNMGKYPDLQGRRLDSVTKVRYNDPGSPAVLEQDGDIMKVFFGKGVHAIAPGQAAVFYEGDDVIGGGWIKASFKQPAFKKYNFSQ</sequence>
<reference key="1">
    <citation type="journal article" date="2010" name="J. Bacteriol.">
        <title>The genome of the amoeba symbiont 'Candidatus Amoebophilus asiaticus' reveals common mechanisms for host cell interaction among amoeba-associated bacteria.</title>
        <authorList>
            <person name="Schmitz-Esser S."/>
            <person name="Tischler P."/>
            <person name="Arnold R."/>
            <person name="Montanaro J."/>
            <person name="Wagner M."/>
            <person name="Rattei T."/>
            <person name="Horn M."/>
        </authorList>
    </citation>
    <scope>NUCLEOTIDE SEQUENCE [LARGE SCALE GENOMIC DNA]</scope>
    <source>
        <strain>5a2</strain>
    </source>
</reference>
<accession>B3ETH8</accession>